<dbReference type="EMBL" id="EU233898">
    <property type="protein sequence ID" value="ABY71717.1"/>
    <property type="molecule type" value="mRNA"/>
</dbReference>
<dbReference type="SMR" id="B1P1G7"/>
<dbReference type="ArachnoServer" id="AS000845">
    <property type="toxin name" value="U2-theraphotoxin-Cg1b"/>
</dbReference>
<dbReference type="GO" id="GO:0005576">
    <property type="term" value="C:extracellular region"/>
    <property type="evidence" value="ECO:0007669"/>
    <property type="project" value="UniProtKB-SubCell"/>
</dbReference>
<dbReference type="GO" id="GO:0008200">
    <property type="term" value="F:ion channel inhibitor activity"/>
    <property type="evidence" value="ECO:0007669"/>
    <property type="project" value="InterPro"/>
</dbReference>
<dbReference type="GO" id="GO:0090729">
    <property type="term" value="F:toxin activity"/>
    <property type="evidence" value="ECO:0007669"/>
    <property type="project" value="UniProtKB-KW"/>
</dbReference>
<dbReference type="InterPro" id="IPR011696">
    <property type="entry name" value="Huwentoxin-1"/>
</dbReference>
<dbReference type="Pfam" id="PF07740">
    <property type="entry name" value="Toxin_12"/>
    <property type="match status" value="1"/>
</dbReference>
<dbReference type="SUPFAM" id="SSF57059">
    <property type="entry name" value="omega toxin-like"/>
    <property type="match status" value="1"/>
</dbReference>
<proteinExistence type="evidence at transcript level"/>
<keyword id="KW-1015">Disulfide bond</keyword>
<keyword id="KW-0872">Ion channel impairing toxin</keyword>
<keyword id="KW-0960">Knottin</keyword>
<keyword id="KW-0964">Secreted</keyword>
<keyword id="KW-0732">Signal</keyword>
<keyword id="KW-0800">Toxin</keyword>
<accession>B1P1G7</accession>
<organism>
    <name type="scientific">Chilobrachys guangxiensis</name>
    <name type="common">Chinese earth tiger tarantula</name>
    <name type="synonym">Chilobrachys jingzhao</name>
    <dbReference type="NCBI Taxonomy" id="278060"/>
    <lineage>
        <taxon>Eukaryota</taxon>
        <taxon>Metazoa</taxon>
        <taxon>Ecdysozoa</taxon>
        <taxon>Arthropoda</taxon>
        <taxon>Chelicerata</taxon>
        <taxon>Arachnida</taxon>
        <taxon>Araneae</taxon>
        <taxon>Mygalomorphae</taxon>
        <taxon>Theraphosidae</taxon>
        <taxon>Chilobrachys</taxon>
    </lineage>
</organism>
<sequence length="84" mass="9659">MKVSVLITLAVLGVMFLLTSAEERGSDQMDSPAWLKSMEIIFQSEERECRWMFGGCTTDSDCCEHLGCRWEKPSWCAWDGTFRK</sequence>
<reference key="1">
    <citation type="journal article" date="2008" name="Cell. Mol. Life Sci.">
        <title>Molecular diversity and evolution of cystine knot toxins of the tarantula Chilobrachys jingzhao.</title>
        <authorList>
            <person name="Chen J."/>
            <person name="Deng M."/>
            <person name="He Q."/>
            <person name="Meng E."/>
            <person name="Jiang L."/>
            <person name="Liao Z."/>
            <person name="Rong M."/>
            <person name="Liang S."/>
        </authorList>
    </citation>
    <scope>NUCLEOTIDE SEQUENCE [LARGE SCALE MRNA]</scope>
    <source>
        <tissue>Venom gland</tissue>
    </source>
</reference>
<comment type="function">
    <text>Probable ion channel inhibitor.</text>
</comment>
<comment type="subcellular location">
    <subcellularLocation>
        <location evidence="1">Secreted</location>
    </subcellularLocation>
</comment>
<comment type="tissue specificity">
    <text>Expressed by the venom gland.</text>
</comment>
<comment type="domain">
    <text evidence="2">The presence of a 'disulfide through disulfide knot' structurally defines this protein as a knottin.</text>
</comment>
<comment type="similarity">
    <text evidence="4">Belongs to the neurotoxin 10 (Hwtx-1) family. 06 (F4b) subfamily.</text>
</comment>
<name>JZ41B_CHIGU</name>
<protein>
    <recommendedName>
        <fullName>U2-theraphotoxin-Cg1b 2</fullName>
        <shortName>U2-TRTX-Cg1b</shortName>
    </recommendedName>
    <alternativeName>
        <fullName>Jingzhaotoxin-41.2</fullName>
        <shortName>JZTX-41.2</shortName>
    </alternativeName>
</protein>
<evidence type="ECO:0000250" key="1"/>
<evidence type="ECO:0000250" key="2">
    <source>
        <dbReference type="UniProtKB" id="P0C247"/>
    </source>
</evidence>
<evidence type="ECO:0000255" key="3"/>
<evidence type="ECO:0000305" key="4"/>
<feature type="signal peptide" evidence="3">
    <location>
        <begin position="1"/>
        <end position="21"/>
    </location>
</feature>
<feature type="propeptide" id="PRO_0000398494" evidence="1">
    <location>
        <begin position="22"/>
        <end position="48"/>
    </location>
</feature>
<feature type="peptide" id="PRO_0000398495" description="U2-theraphotoxin-Cg1b 2">
    <location>
        <begin position="49"/>
        <end position="84"/>
    </location>
</feature>
<feature type="disulfide bond" evidence="2">
    <location>
        <begin position="49"/>
        <end position="63"/>
    </location>
</feature>
<feature type="disulfide bond" evidence="2">
    <location>
        <begin position="56"/>
        <end position="68"/>
    </location>
</feature>
<feature type="disulfide bond" evidence="2">
    <location>
        <begin position="62"/>
        <end position="76"/>
    </location>
</feature>